<feature type="chain" id="PRO_1000096771" description="Phosphopantetheine adenylyltransferase">
    <location>
        <begin position="1"/>
        <end position="165"/>
    </location>
</feature>
<feature type="binding site" evidence="1">
    <location>
        <begin position="9"/>
        <end position="10"/>
    </location>
    <ligand>
        <name>ATP</name>
        <dbReference type="ChEBI" id="CHEBI:30616"/>
    </ligand>
</feature>
<feature type="binding site" evidence="1">
    <location>
        <position position="9"/>
    </location>
    <ligand>
        <name>substrate</name>
    </ligand>
</feature>
<feature type="binding site" evidence="1">
    <location>
        <position position="17"/>
    </location>
    <ligand>
        <name>ATP</name>
        <dbReference type="ChEBI" id="CHEBI:30616"/>
    </ligand>
</feature>
<feature type="binding site" evidence="1">
    <location>
        <position position="41"/>
    </location>
    <ligand>
        <name>substrate</name>
    </ligand>
</feature>
<feature type="binding site" evidence="1">
    <location>
        <position position="73"/>
    </location>
    <ligand>
        <name>substrate</name>
    </ligand>
</feature>
<feature type="binding site" evidence="1">
    <location>
        <position position="87"/>
    </location>
    <ligand>
        <name>substrate</name>
    </ligand>
</feature>
<feature type="binding site" evidence="1">
    <location>
        <begin position="88"/>
        <end position="90"/>
    </location>
    <ligand>
        <name>ATP</name>
        <dbReference type="ChEBI" id="CHEBI:30616"/>
    </ligand>
</feature>
<feature type="binding site" evidence="1">
    <location>
        <position position="98"/>
    </location>
    <ligand>
        <name>ATP</name>
        <dbReference type="ChEBI" id="CHEBI:30616"/>
    </ligand>
</feature>
<feature type="binding site" evidence="1">
    <location>
        <begin position="123"/>
        <end position="129"/>
    </location>
    <ligand>
        <name>ATP</name>
        <dbReference type="ChEBI" id="CHEBI:30616"/>
    </ligand>
</feature>
<feature type="site" description="Transition state stabilizer" evidence="1">
    <location>
        <position position="17"/>
    </location>
</feature>
<protein>
    <recommendedName>
        <fullName evidence="1">Phosphopantetheine adenylyltransferase</fullName>
        <ecNumber evidence="1">2.7.7.3</ecNumber>
    </recommendedName>
    <alternativeName>
        <fullName evidence="1">Dephospho-CoA pyrophosphorylase</fullName>
    </alternativeName>
    <alternativeName>
        <fullName evidence="1">Pantetheine-phosphate adenylyltransferase</fullName>
        <shortName evidence="1">PPAT</shortName>
    </alternativeName>
</protein>
<accession>B1JYQ4</accession>
<gene>
    <name evidence="1" type="primary">coaD</name>
    <name type="ordered locus">Bcenmc03_2818</name>
</gene>
<dbReference type="EC" id="2.7.7.3" evidence="1"/>
<dbReference type="EMBL" id="CP000958">
    <property type="protein sequence ID" value="ACA91977.1"/>
    <property type="molecule type" value="Genomic_DNA"/>
</dbReference>
<dbReference type="RefSeq" id="WP_006477773.1">
    <property type="nucleotide sequence ID" value="NC_010508.1"/>
</dbReference>
<dbReference type="SMR" id="B1JYQ4"/>
<dbReference type="GeneID" id="83049603"/>
<dbReference type="KEGG" id="bcm:Bcenmc03_2818"/>
<dbReference type="HOGENOM" id="CLU_100149_0_1_4"/>
<dbReference type="UniPathway" id="UPA00241">
    <property type="reaction ID" value="UER00355"/>
</dbReference>
<dbReference type="Proteomes" id="UP000002169">
    <property type="component" value="Chromosome 1"/>
</dbReference>
<dbReference type="GO" id="GO:0005737">
    <property type="term" value="C:cytoplasm"/>
    <property type="evidence" value="ECO:0007669"/>
    <property type="project" value="UniProtKB-SubCell"/>
</dbReference>
<dbReference type="GO" id="GO:0005524">
    <property type="term" value="F:ATP binding"/>
    <property type="evidence" value="ECO:0007669"/>
    <property type="project" value="UniProtKB-KW"/>
</dbReference>
<dbReference type="GO" id="GO:0004595">
    <property type="term" value="F:pantetheine-phosphate adenylyltransferase activity"/>
    <property type="evidence" value="ECO:0007669"/>
    <property type="project" value="UniProtKB-UniRule"/>
</dbReference>
<dbReference type="GO" id="GO:0015937">
    <property type="term" value="P:coenzyme A biosynthetic process"/>
    <property type="evidence" value="ECO:0007669"/>
    <property type="project" value="UniProtKB-UniRule"/>
</dbReference>
<dbReference type="CDD" id="cd02163">
    <property type="entry name" value="PPAT"/>
    <property type="match status" value="1"/>
</dbReference>
<dbReference type="Gene3D" id="3.40.50.620">
    <property type="entry name" value="HUPs"/>
    <property type="match status" value="1"/>
</dbReference>
<dbReference type="HAMAP" id="MF_00151">
    <property type="entry name" value="PPAT_bact"/>
    <property type="match status" value="1"/>
</dbReference>
<dbReference type="InterPro" id="IPR004821">
    <property type="entry name" value="Cyt_trans-like"/>
</dbReference>
<dbReference type="InterPro" id="IPR001980">
    <property type="entry name" value="PPAT"/>
</dbReference>
<dbReference type="InterPro" id="IPR014729">
    <property type="entry name" value="Rossmann-like_a/b/a_fold"/>
</dbReference>
<dbReference type="NCBIfam" id="TIGR01510">
    <property type="entry name" value="coaD_prev_kdtB"/>
    <property type="match status" value="1"/>
</dbReference>
<dbReference type="NCBIfam" id="TIGR00125">
    <property type="entry name" value="cyt_tran_rel"/>
    <property type="match status" value="1"/>
</dbReference>
<dbReference type="PANTHER" id="PTHR21342">
    <property type="entry name" value="PHOSPHOPANTETHEINE ADENYLYLTRANSFERASE"/>
    <property type="match status" value="1"/>
</dbReference>
<dbReference type="PANTHER" id="PTHR21342:SF1">
    <property type="entry name" value="PHOSPHOPANTETHEINE ADENYLYLTRANSFERASE"/>
    <property type="match status" value="1"/>
</dbReference>
<dbReference type="Pfam" id="PF01467">
    <property type="entry name" value="CTP_transf_like"/>
    <property type="match status" value="1"/>
</dbReference>
<dbReference type="PRINTS" id="PR01020">
    <property type="entry name" value="LPSBIOSNTHSS"/>
</dbReference>
<dbReference type="SUPFAM" id="SSF52374">
    <property type="entry name" value="Nucleotidylyl transferase"/>
    <property type="match status" value="1"/>
</dbReference>
<reference key="1">
    <citation type="submission" date="2008-02" db="EMBL/GenBank/DDBJ databases">
        <title>Complete sequence of chromosome 1 of Burkholderia cenocepacia MC0-3.</title>
        <authorList>
            <person name="Copeland A."/>
            <person name="Lucas S."/>
            <person name="Lapidus A."/>
            <person name="Barry K."/>
            <person name="Bruce D."/>
            <person name="Goodwin L."/>
            <person name="Glavina del Rio T."/>
            <person name="Dalin E."/>
            <person name="Tice H."/>
            <person name="Pitluck S."/>
            <person name="Chain P."/>
            <person name="Malfatti S."/>
            <person name="Shin M."/>
            <person name="Vergez L."/>
            <person name="Schmutz J."/>
            <person name="Larimer F."/>
            <person name="Land M."/>
            <person name="Hauser L."/>
            <person name="Kyrpides N."/>
            <person name="Mikhailova N."/>
            <person name="Tiedje J."/>
            <person name="Richardson P."/>
        </authorList>
    </citation>
    <scope>NUCLEOTIDE SEQUENCE [LARGE SCALE GENOMIC DNA]</scope>
    <source>
        <strain>MC0-3</strain>
    </source>
</reference>
<name>COAD_BURO0</name>
<keyword id="KW-0067">ATP-binding</keyword>
<keyword id="KW-0173">Coenzyme A biosynthesis</keyword>
<keyword id="KW-0963">Cytoplasm</keyword>
<keyword id="KW-0460">Magnesium</keyword>
<keyword id="KW-0547">Nucleotide-binding</keyword>
<keyword id="KW-0548">Nucleotidyltransferase</keyword>
<keyword id="KW-0808">Transferase</keyword>
<comment type="function">
    <text evidence="1">Reversibly transfers an adenylyl group from ATP to 4'-phosphopantetheine, yielding dephospho-CoA (dPCoA) and pyrophosphate.</text>
</comment>
<comment type="catalytic activity">
    <reaction evidence="1">
        <text>(R)-4'-phosphopantetheine + ATP + H(+) = 3'-dephospho-CoA + diphosphate</text>
        <dbReference type="Rhea" id="RHEA:19801"/>
        <dbReference type="ChEBI" id="CHEBI:15378"/>
        <dbReference type="ChEBI" id="CHEBI:30616"/>
        <dbReference type="ChEBI" id="CHEBI:33019"/>
        <dbReference type="ChEBI" id="CHEBI:57328"/>
        <dbReference type="ChEBI" id="CHEBI:61723"/>
        <dbReference type="EC" id="2.7.7.3"/>
    </reaction>
</comment>
<comment type="cofactor">
    <cofactor evidence="1">
        <name>Mg(2+)</name>
        <dbReference type="ChEBI" id="CHEBI:18420"/>
    </cofactor>
</comment>
<comment type="pathway">
    <text evidence="1">Cofactor biosynthesis; coenzyme A biosynthesis; CoA from (R)-pantothenate: step 4/5.</text>
</comment>
<comment type="subunit">
    <text evidence="1">Homohexamer.</text>
</comment>
<comment type="subcellular location">
    <subcellularLocation>
        <location evidence="1">Cytoplasm</location>
    </subcellularLocation>
</comment>
<comment type="similarity">
    <text evidence="1">Belongs to the bacterial CoaD family.</text>
</comment>
<evidence type="ECO:0000255" key="1">
    <source>
        <dbReference type="HAMAP-Rule" id="MF_00151"/>
    </source>
</evidence>
<proteinExistence type="inferred from homology"/>
<sequence length="165" mass="18432">MVVAVYPGTFDPLTRGHEDLVRRASSIFDTLVVGVADSRAKKPFFSLEERLTIANEVLGHYPNVKVMSFTGLLKDFVRVNNARVIVRGLRAVSDFEYEFQMAGMNRYLLPDVETMFMTPSDQYQFISGTIVREIAQLGGDVSKFVFPSVEKWLTEKVTAMGGPAA</sequence>
<organism>
    <name type="scientific">Burkholderia orbicola (strain MC0-3)</name>
    <dbReference type="NCBI Taxonomy" id="406425"/>
    <lineage>
        <taxon>Bacteria</taxon>
        <taxon>Pseudomonadati</taxon>
        <taxon>Pseudomonadota</taxon>
        <taxon>Betaproteobacteria</taxon>
        <taxon>Burkholderiales</taxon>
        <taxon>Burkholderiaceae</taxon>
        <taxon>Burkholderia</taxon>
        <taxon>Burkholderia cepacia complex</taxon>
        <taxon>Burkholderia orbicola</taxon>
    </lineage>
</organism>